<feature type="chain" id="PRO_0000271898" description="Ribosomal RNA small subunit methyltransferase A">
    <location>
        <begin position="1"/>
        <end position="284"/>
    </location>
</feature>
<feature type="binding site" evidence="1">
    <location>
        <position position="26"/>
    </location>
    <ligand>
        <name>S-adenosyl-L-methionine</name>
        <dbReference type="ChEBI" id="CHEBI:59789"/>
    </ligand>
</feature>
<feature type="binding site" evidence="1">
    <location>
        <position position="28"/>
    </location>
    <ligand>
        <name>S-adenosyl-L-methionine</name>
        <dbReference type="ChEBI" id="CHEBI:59789"/>
    </ligand>
</feature>
<feature type="binding site" evidence="1">
    <location>
        <position position="53"/>
    </location>
    <ligand>
        <name>S-adenosyl-L-methionine</name>
        <dbReference type="ChEBI" id="CHEBI:59789"/>
    </ligand>
</feature>
<feature type="binding site" evidence="1">
    <location>
        <position position="74"/>
    </location>
    <ligand>
        <name>S-adenosyl-L-methionine</name>
        <dbReference type="ChEBI" id="CHEBI:59789"/>
    </ligand>
</feature>
<feature type="binding site" evidence="1">
    <location>
        <position position="97"/>
    </location>
    <ligand>
        <name>S-adenosyl-L-methionine</name>
        <dbReference type="ChEBI" id="CHEBI:59789"/>
    </ligand>
</feature>
<feature type="binding site" evidence="1">
    <location>
        <position position="127"/>
    </location>
    <ligand>
        <name>S-adenosyl-L-methionine</name>
        <dbReference type="ChEBI" id="CHEBI:59789"/>
    </ligand>
</feature>
<sequence>MTDRYPSPRALLDRYDLRAKKSWGQNFLGEEAVLDDIARLAAPRAGDPVLELGAGLGHLTARLLARGARVVAVERDRDMARVLRGELGDRITLLEADAARLDHAALAARFGAPAAAGEGARLAVVGNLPYHLTSPILFSILDQVAHVSRAVFLLQREVAERLAAPPASRDWGLLSVLLQREAEVSVERIVPPGAFWPPPKVESAVLCALFRPPADAVGDPARFRRLVKAGFGLRRKTLRNALGSAKLAEPARLEAAFAAAGVDPGRRGETLTLAEWAALDRALG</sequence>
<evidence type="ECO:0000255" key="1">
    <source>
        <dbReference type="HAMAP-Rule" id="MF_00607"/>
    </source>
</evidence>
<organism>
    <name type="scientific">Anaeromyxobacter dehalogenans (strain 2CP-C)</name>
    <dbReference type="NCBI Taxonomy" id="290397"/>
    <lineage>
        <taxon>Bacteria</taxon>
        <taxon>Pseudomonadati</taxon>
        <taxon>Myxococcota</taxon>
        <taxon>Myxococcia</taxon>
        <taxon>Myxococcales</taxon>
        <taxon>Cystobacterineae</taxon>
        <taxon>Anaeromyxobacteraceae</taxon>
        <taxon>Anaeromyxobacter</taxon>
    </lineage>
</organism>
<proteinExistence type="inferred from homology"/>
<gene>
    <name evidence="1" type="primary">rsmA</name>
    <name evidence="1" type="synonym">ksgA</name>
    <name type="ordered locus">Adeh_3685</name>
</gene>
<protein>
    <recommendedName>
        <fullName evidence="1">Ribosomal RNA small subunit methyltransferase A</fullName>
        <ecNumber evidence="1">2.1.1.182</ecNumber>
    </recommendedName>
    <alternativeName>
        <fullName evidence="1">16S rRNA (adenine(1518)-N(6)/adenine(1519)-N(6))-dimethyltransferase</fullName>
    </alternativeName>
    <alternativeName>
        <fullName evidence="1">16S rRNA dimethyladenosine transferase</fullName>
    </alternativeName>
    <alternativeName>
        <fullName evidence="1">16S rRNA dimethylase</fullName>
    </alternativeName>
    <alternativeName>
        <fullName evidence="1">S-adenosylmethionine-6-N', N'-adenosyl(rRNA) dimethyltransferase</fullName>
    </alternativeName>
</protein>
<reference key="1">
    <citation type="submission" date="2006-01" db="EMBL/GenBank/DDBJ databases">
        <title>Complete sequence of Anaeromyxobacter dehalogenans 2CP-C.</title>
        <authorList>
            <person name="Copeland A."/>
            <person name="Lucas S."/>
            <person name="Lapidus A."/>
            <person name="Barry K."/>
            <person name="Detter J.C."/>
            <person name="Glavina T."/>
            <person name="Hammon N."/>
            <person name="Israni S."/>
            <person name="Pitluck S."/>
            <person name="Brettin T."/>
            <person name="Bruce D."/>
            <person name="Han C."/>
            <person name="Tapia R."/>
            <person name="Gilna P."/>
            <person name="Kiss H."/>
            <person name="Schmutz J."/>
            <person name="Larimer F."/>
            <person name="Land M."/>
            <person name="Kyrpides N."/>
            <person name="Anderson I."/>
            <person name="Sanford R.A."/>
            <person name="Ritalahti K.M."/>
            <person name="Thomas H.S."/>
            <person name="Kirby J.R."/>
            <person name="Zhulin I.B."/>
            <person name="Loeffler F.E."/>
            <person name="Richardson P."/>
        </authorList>
    </citation>
    <scope>NUCLEOTIDE SEQUENCE [LARGE SCALE GENOMIC DNA]</scope>
    <source>
        <strain>2CP-C</strain>
    </source>
</reference>
<accession>Q2IFT9</accession>
<comment type="function">
    <text evidence="1">Specifically dimethylates two adjacent adenosines (A1518 and A1519) in the loop of a conserved hairpin near the 3'-end of 16S rRNA in the 30S particle. May play a critical role in biogenesis of 30S subunits.</text>
</comment>
<comment type="catalytic activity">
    <reaction evidence="1">
        <text>adenosine(1518)/adenosine(1519) in 16S rRNA + 4 S-adenosyl-L-methionine = N(6)-dimethyladenosine(1518)/N(6)-dimethyladenosine(1519) in 16S rRNA + 4 S-adenosyl-L-homocysteine + 4 H(+)</text>
        <dbReference type="Rhea" id="RHEA:19609"/>
        <dbReference type="Rhea" id="RHEA-COMP:10232"/>
        <dbReference type="Rhea" id="RHEA-COMP:10233"/>
        <dbReference type="ChEBI" id="CHEBI:15378"/>
        <dbReference type="ChEBI" id="CHEBI:57856"/>
        <dbReference type="ChEBI" id="CHEBI:59789"/>
        <dbReference type="ChEBI" id="CHEBI:74411"/>
        <dbReference type="ChEBI" id="CHEBI:74493"/>
        <dbReference type="EC" id="2.1.1.182"/>
    </reaction>
</comment>
<comment type="subcellular location">
    <subcellularLocation>
        <location evidence="1">Cytoplasm</location>
    </subcellularLocation>
</comment>
<comment type="similarity">
    <text evidence="1">Belongs to the class I-like SAM-binding methyltransferase superfamily. rRNA adenine N(6)-methyltransferase family. RsmA subfamily.</text>
</comment>
<name>RSMA_ANADE</name>
<keyword id="KW-0963">Cytoplasm</keyword>
<keyword id="KW-0489">Methyltransferase</keyword>
<keyword id="KW-1185">Reference proteome</keyword>
<keyword id="KW-0694">RNA-binding</keyword>
<keyword id="KW-0698">rRNA processing</keyword>
<keyword id="KW-0949">S-adenosyl-L-methionine</keyword>
<keyword id="KW-0808">Transferase</keyword>
<dbReference type="EC" id="2.1.1.182" evidence="1"/>
<dbReference type="EMBL" id="CP000251">
    <property type="protein sequence ID" value="ABC83451.1"/>
    <property type="molecule type" value="Genomic_DNA"/>
</dbReference>
<dbReference type="RefSeq" id="WP_011422733.1">
    <property type="nucleotide sequence ID" value="NC_007760.1"/>
</dbReference>
<dbReference type="SMR" id="Q2IFT9"/>
<dbReference type="STRING" id="290397.Adeh_3685"/>
<dbReference type="KEGG" id="ade:Adeh_3685"/>
<dbReference type="eggNOG" id="COG0030">
    <property type="taxonomic scope" value="Bacteria"/>
</dbReference>
<dbReference type="HOGENOM" id="CLU_041220_0_1_7"/>
<dbReference type="OrthoDB" id="9814755at2"/>
<dbReference type="Proteomes" id="UP000001935">
    <property type="component" value="Chromosome"/>
</dbReference>
<dbReference type="GO" id="GO:0005829">
    <property type="term" value="C:cytosol"/>
    <property type="evidence" value="ECO:0007669"/>
    <property type="project" value="TreeGrafter"/>
</dbReference>
<dbReference type="GO" id="GO:0052908">
    <property type="term" value="F:16S rRNA (adenine(1518)-N(6)/adenine(1519)-N(6))-dimethyltransferase activity"/>
    <property type="evidence" value="ECO:0007669"/>
    <property type="project" value="UniProtKB-EC"/>
</dbReference>
<dbReference type="GO" id="GO:0003723">
    <property type="term" value="F:RNA binding"/>
    <property type="evidence" value="ECO:0007669"/>
    <property type="project" value="UniProtKB-KW"/>
</dbReference>
<dbReference type="CDD" id="cd02440">
    <property type="entry name" value="AdoMet_MTases"/>
    <property type="match status" value="1"/>
</dbReference>
<dbReference type="Gene3D" id="1.10.8.100">
    <property type="entry name" value="Ribosomal RNA adenine dimethylase-like, domain 2"/>
    <property type="match status" value="1"/>
</dbReference>
<dbReference type="Gene3D" id="3.40.50.150">
    <property type="entry name" value="Vaccinia Virus protein VP39"/>
    <property type="match status" value="1"/>
</dbReference>
<dbReference type="HAMAP" id="MF_00607">
    <property type="entry name" value="16SrRNA_methyltr_A"/>
    <property type="match status" value="1"/>
</dbReference>
<dbReference type="InterPro" id="IPR001737">
    <property type="entry name" value="KsgA/Erm"/>
</dbReference>
<dbReference type="InterPro" id="IPR023165">
    <property type="entry name" value="rRNA_Ade_diMease-like_C"/>
</dbReference>
<dbReference type="InterPro" id="IPR020596">
    <property type="entry name" value="rRNA_Ade_Mease_Trfase_CS"/>
</dbReference>
<dbReference type="InterPro" id="IPR020598">
    <property type="entry name" value="rRNA_Ade_methylase_Trfase_N"/>
</dbReference>
<dbReference type="InterPro" id="IPR011530">
    <property type="entry name" value="rRNA_adenine_dimethylase"/>
</dbReference>
<dbReference type="InterPro" id="IPR029063">
    <property type="entry name" value="SAM-dependent_MTases_sf"/>
</dbReference>
<dbReference type="NCBIfam" id="TIGR00755">
    <property type="entry name" value="ksgA"/>
    <property type="match status" value="1"/>
</dbReference>
<dbReference type="PANTHER" id="PTHR11727">
    <property type="entry name" value="DIMETHYLADENOSINE TRANSFERASE"/>
    <property type="match status" value="1"/>
</dbReference>
<dbReference type="PANTHER" id="PTHR11727:SF7">
    <property type="entry name" value="DIMETHYLADENOSINE TRANSFERASE-RELATED"/>
    <property type="match status" value="1"/>
</dbReference>
<dbReference type="Pfam" id="PF00398">
    <property type="entry name" value="RrnaAD"/>
    <property type="match status" value="1"/>
</dbReference>
<dbReference type="SMART" id="SM00650">
    <property type="entry name" value="rADc"/>
    <property type="match status" value="1"/>
</dbReference>
<dbReference type="SUPFAM" id="SSF53335">
    <property type="entry name" value="S-adenosyl-L-methionine-dependent methyltransferases"/>
    <property type="match status" value="1"/>
</dbReference>
<dbReference type="PROSITE" id="PS01131">
    <property type="entry name" value="RRNA_A_DIMETH"/>
    <property type="match status" value="1"/>
</dbReference>
<dbReference type="PROSITE" id="PS51689">
    <property type="entry name" value="SAM_RNA_A_N6_MT"/>
    <property type="match status" value="1"/>
</dbReference>